<comment type="function">
    <text evidence="1">Reversibly transfers an adenylyl group from ATP to 4'-phosphopantetheine, yielding dephospho-CoA (dPCoA) and pyrophosphate.</text>
</comment>
<comment type="catalytic activity">
    <reaction evidence="1">
        <text>(R)-4'-phosphopantetheine + ATP + H(+) = 3'-dephospho-CoA + diphosphate</text>
        <dbReference type="Rhea" id="RHEA:19801"/>
        <dbReference type="ChEBI" id="CHEBI:15378"/>
        <dbReference type="ChEBI" id="CHEBI:30616"/>
        <dbReference type="ChEBI" id="CHEBI:33019"/>
        <dbReference type="ChEBI" id="CHEBI:57328"/>
        <dbReference type="ChEBI" id="CHEBI:61723"/>
        <dbReference type="EC" id="2.7.7.3"/>
    </reaction>
</comment>
<comment type="cofactor">
    <cofactor evidence="1">
        <name>Mg(2+)</name>
        <dbReference type="ChEBI" id="CHEBI:18420"/>
    </cofactor>
</comment>
<comment type="pathway">
    <text evidence="1">Cofactor biosynthesis; coenzyme A biosynthesis; CoA from (R)-pantothenate: step 4/5.</text>
</comment>
<comment type="subunit">
    <text evidence="1">Homohexamer.</text>
</comment>
<comment type="subcellular location">
    <subcellularLocation>
        <location evidence="1">Cytoplasm</location>
    </subcellularLocation>
</comment>
<comment type="similarity">
    <text evidence="1">Belongs to the bacterial CoaD family.</text>
</comment>
<keyword id="KW-0067">ATP-binding</keyword>
<keyword id="KW-0173">Coenzyme A biosynthesis</keyword>
<keyword id="KW-0963">Cytoplasm</keyword>
<keyword id="KW-0460">Magnesium</keyword>
<keyword id="KW-0547">Nucleotide-binding</keyword>
<keyword id="KW-0548">Nucleotidyltransferase</keyword>
<keyword id="KW-0808">Transferase</keyword>
<gene>
    <name evidence="1" type="primary">coaD</name>
    <name type="ordered locus">HDEF_1812</name>
</gene>
<protein>
    <recommendedName>
        <fullName evidence="1">Phosphopantetheine adenylyltransferase</fullName>
        <ecNumber evidence="1">2.7.7.3</ecNumber>
    </recommendedName>
    <alternativeName>
        <fullName evidence="1">Dephospho-CoA pyrophosphorylase</fullName>
    </alternativeName>
    <alternativeName>
        <fullName evidence="1">Pantetheine-phosphate adenylyltransferase</fullName>
        <shortName evidence="1">PPAT</shortName>
    </alternativeName>
</protein>
<organism>
    <name type="scientific">Hamiltonella defensa subsp. Acyrthosiphon pisum (strain 5AT)</name>
    <dbReference type="NCBI Taxonomy" id="572265"/>
    <lineage>
        <taxon>Bacteria</taxon>
        <taxon>Pseudomonadati</taxon>
        <taxon>Pseudomonadota</taxon>
        <taxon>Gammaproteobacteria</taxon>
        <taxon>Enterobacterales</taxon>
        <taxon>Enterobacteriaceae</taxon>
        <taxon>aphid secondary symbionts</taxon>
        <taxon>Candidatus Hamiltonella</taxon>
    </lineage>
</organism>
<accession>C4K764</accession>
<name>COAD_HAMD5</name>
<feature type="chain" id="PRO_1000203425" description="Phosphopantetheine adenylyltransferase">
    <location>
        <begin position="1"/>
        <end position="156"/>
    </location>
</feature>
<feature type="binding site" evidence="1">
    <location>
        <begin position="10"/>
        <end position="11"/>
    </location>
    <ligand>
        <name>ATP</name>
        <dbReference type="ChEBI" id="CHEBI:30616"/>
    </ligand>
</feature>
<feature type="binding site" evidence="1">
    <location>
        <position position="10"/>
    </location>
    <ligand>
        <name>substrate</name>
    </ligand>
</feature>
<feature type="binding site" evidence="1">
    <location>
        <position position="18"/>
    </location>
    <ligand>
        <name>ATP</name>
        <dbReference type="ChEBI" id="CHEBI:30616"/>
    </ligand>
</feature>
<feature type="binding site" evidence="1">
    <location>
        <position position="42"/>
    </location>
    <ligand>
        <name>substrate</name>
    </ligand>
</feature>
<feature type="binding site" evidence="1">
    <location>
        <position position="74"/>
    </location>
    <ligand>
        <name>substrate</name>
    </ligand>
</feature>
<feature type="binding site" evidence="1">
    <location>
        <position position="88"/>
    </location>
    <ligand>
        <name>substrate</name>
    </ligand>
</feature>
<feature type="binding site" evidence="1">
    <location>
        <begin position="89"/>
        <end position="91"/>
    </location>
    <ligand>
        <name>ATP</name>
        <dbReference type="ChEBI" id="CHEBI:30616"/>
    </ligand>
</feature>
<feature type="binding site" evidence="1">
    <location>
        <position position="99"/>
    </location>
    <ligand>
        <name>ATP</name>
        <dbReference type="ChEBI" id="CHEBI:30616"/>
    </ligand>
</feature>
<feature type="binding site" evidence="1">
    <location>
        <begin position="124"/>
        <end position="130"/>
    </location>
    <ligand>
        <name>ATP</name>
        <dbReference type="ChEBI" id="CHEBI:30616"/>
    </ligand>
</feature>
<feature type="site" description="Transition state stabilizer" evidence="1">
    <location>
        <position position="18"/>
    </location>
</feature>
<dbReference type="EC" id="2.7.7.3" evidence="1"/>
<dbReference type="EMBL" id="CP001277">
    <property type="protein sequence ID" value="ACQ68407.1"/>
    <property type="molecule type" value="Genomic_DNA"/>
</dbReference>
<dbReference type="RefSeq" id="WP_015874171.1">
    <property type="nucleotide sequence ID" value="NC_012751.1"/>
</dbReference>
<dbReference type="SMR" id="C4K764"/>
<dbReference type="STRING" id="572265.HDEF_1812"/>
<dbReference type="GeneID" id="66261399"/>
<dbReference type="KEGG" id="hde:HDEF_1812"/>
<dbReference type="eggNOG" id="COG0669">
    <property type="taxonomic scope" value="Bacteria"/>
</dbReference>
<dbReference type="HOGENOM" id="CLU_100149_0_1_6"/>
<dbReference type="UniPathway" id="UPA00241">
    <property type="reaction ID" value="UER00355"/>
</dbReference>
<dbReference type="Proteomes" id="UP000002334">
    <property type="component" value="Chromosome"/>
</dbReference>
<dbReference type="GO" id="GO:0005737">
    <property type="term" value="C:cytoplasm"/>
    <property type="evidence" value="ECO:0007669"/>
    <property type="project" value="UniProtKB-SubCell"/>
</dbReference>
<dbReference type="GO" id="GO:0005524">
    <property type="term" value="F:ATP binding"/>
    <property type="evidence" value="ECO:0007669"/>
    <property type="project" value="UniProtKB-KW"/>
</dbReference>
<dbReference type="GO" id="GO:0004595">
    <property type="term" value="F:pantetheine-phosphate adenylyltransferase activity"/>
    <property type="evidence" value="ECO:0007669"/>
    <property type="project" value="UniProtKB-UniRule"/>
</dbReference>
<dbReference type="GO" id="GO:0015937">
    <property type="term" value="P:coenzyme A biosynthetic process"/>
    <property type="evidence" value="ECO:0007669"/>
    <property type="project" value="UniProtKB-UniRule"/>
</dbReference>
<dbReference type="CDD" id="cd02163">
    <property type="entry name" value="PPAT"/>
    <property type="match status" value="1"/>
</dbReference>
<dbReference type="Gene3D" id="3.40.50.620">
    <property type="entry name" value="HUPs"/>
    <property type="match status" value="1"/>
</dbReference>
<dbReference type="HAMAP" id="MF_00151">
    <property type="entry name" value="PPAT_bact"/>
    <property type="match status" value="1"/>
</dbReference>
<dbReference type="InterPro" id="IPR004821">
    <property type="entry name" value="Cyt_trans-like"/>
</dbReference>
<dbReference type="InterPro" id="IPR001980">
    <property type="entry name" value="PPAT"/>
</dbReference>
<dbReference type="InterPro" id="IPR014729">
    <property type="entry name" value="Rossmann-like_a/b/a_fold"/>
</dbReference>
<dbReference type="NCBIfam" id="TIGR01510">
    <property type="entry name" value="coaD_prev_kdtB"/>
    <property type="match status" value="1"/>
</dbReference>
<dbReference type="NCBIfam" id="TIGR00125">
    <property type="entry name" value="cyt_tran_rel"/>
    <property type="match status" value="1"/>
</dbReference>
<dbReference type="PANTHER" id="PTHR21342">
    <property type="entry name" value="PHOSPHOPANTETHEINE ADENYLYLTRANSFERASE"/>
    <property type="match status" value="1"/>
</dbReference>
<dbReference type="PANTHER" id="PTHR21342:SF1">
    <property type="entry name" value="PHOSPHOPANTETHEINE ADENYLYLTRANSFERASE"/>
    <property type="match status" value="1"/>
</dbReference>
<dbReference type="Pfam" id="PF01467">
    <property type="entry name" value="CTP_transf_like"/>
    <property type="match status" value="1"/>
</dbReference>
<dbReference type="PRINTS" id="PR01020">
    <property type="entry name" value="LPSBIOSNTHSS"/>
</dbReference>
<dbReference type="SUPFAM" id="SSF52374">
    <property type="entry name" value="Nucleotidylyl transferase"/>
    <property type="match status" value="1"/>
</dbReference>
<reference key="1">
    <citation type="journal article" date="2009" name="Proc. Natl. Acad. Sci. U.S.A.">
        <title>Hamiltonella defensa, genome evolution of protective bacterial endosymbiont from pathogenic ancestors.</title>
        <authorList>
            <person name="Degnan P.H."/>
            <person name="Yu Y."/>
            <person name="Sisneros N."/>
            <person name="Wing R.A."/>
            <person name="Moran N.A."/>
        </authorList>
    </citation>
    <scope>NUCLEOTIDE SEQUENCE [LARGE SCALE GENOMIC DNA]</scope>
    <source>
        <strain>5AT</strain>
    </source>
</reference>
<proteinExistence type="inferred from homology"/>
<sequence>MSIRVIYPGTFDPITNGHLDLLSRACALFDHVILAIAESPNKKTLFSLNERVDLAKGATAHLNNIEVTSFHGLLIHFAQQKNIPILLRGIRSLSDFEQEWQLCHMNHRIMPELETLFLMPSEKWAFISSSLVKEIAQYRGDVSAFVPDCVKEALLR</sequence>
<evidence type="ECO:0000255" key="1">
    <source>
        <dbReference type="HAMAP-Rule" id="MF_00151"/>
    </source>
</evidence>